<organism>
    <name type="scientific">Homo sapiens</name>
    <name type="common">Human</name>
    <dbReference type="NCBI Taxonomy" id="9606"/>
    <lineage>
        <taxon>Eukaryota</taxon>
        <taxon>Metazoa</taxon>
        <taxon>Chordata</taxon>
        <taxon>Craniata</taxon>
        <taxon>Vertebrata</taxon>
        <taxon>Euteleostomi</taxon>
        <taxon>Mammalia</taxon>
        <taxon>Eutheria</taxon>
        <taxon>Euarchontoglires</taxon>
        <taxon>Primates</taxon>
        <taxon>Haplorrhini</taxon>
        <taxon>Catarrhini</taxon>
        <taxon>Hominidae</taxon>
        <taxon>Homo</taxon>
    </lineage>
</organism>
<accession>P07478</accession>
<keyword id="KW-0106">Calcium</keyword>
<keyword id="KW-0222">Digestion</keyword>
<keyword id="KW-0903">Direct protein sequencing</keyword>
<keyword id="KW-1015">Disulfide bond</keyword>
<keyword id="KW-0378">Hydrolase</keyword>
<keyword id="KW-0479">Metal-binding</keyword>
<keyword id="KW-0645">Protease</keyword>
<keyword id="KW-1267">Proteomics identification</keyword>
<keyword id="KW-1185">Reference proteome</keyword>
<keyword id="KW-0964">Secreted</keyword>
<keyword id="KW-0720">Serine protease</keyword>
<keyword id="KW-0732">Signal</keyword>
<keyword id="KW-0765">Sulfation</keyword>
<keyword id="KW-0865">Zymogen</keyword>
<name>TRY2_HUMAN</name>
<evidence type="ECO:0000250" key="1"/>
<evidence type="ECO:0000255" key="2">
    <source>
        <dbReference type="PROSITE-ProRule" id="PRU00274"/>
    </source>
</evidence>
<evidence type="ECO:0000269" key="3">
    <source>
    </source>
</evidence>
<evidence type="ECO:0000269" key="4">
    <source>
    </source>
</evidence>
<evidence type="ECO:0000269" key="5">
    <source>
    </source>
</evidence>
<evidence type="ECO:0000269" key="6">
    <source>
    </source>
</evidence>
<evidence type="ECO:0000269" key="7">
    <source>
    </source>
</evidence>
<evidence type="ECO:0000305" key="8">
    <source>
    </source>
</evidence>
<evidence type="ECO:0000305" key="9">
    <source>
    </source>
</evidence>
<feature type="signal peptide" evidence="7">
    <location>
        <begin position="1"/>
        <end position="15"/>
    </location>
</feature>
<feature type="propeptide" id="PRO_0000028199" description="Activation peptide">
    <location>
        <begin position="16"/>
        <end position="23"/>
    </location>
</feature>
<feature type="chain" id="PRO_0000028200" description="Trypsin-2">
    <location>
        <begin position="24"/>
        <end position="247"/>
    </location>
</feature>
<feature type="domain" description="Peptidase S1" evidence="2">
    <location>
        <begin position="24"/>
        <end position="244"/>
    </location>
</feature>
<feature type="active site" description="Charge relay system" evidence="1">
    <location>
        <position position="63"/>
    </location>
</feature>
<feature type="active site" description="Charge relay system" evidence="1">
    <location>
        <position position="107"/>
    </location>
</feature>
<feature type="active site" description="Charge relay system" evidence="1">
    <location>
        <position position="200"/>
    </location>
</feature>
<feature type="binding site" evidence="1">
    <location>
        <position position="75"/>
    </location>
    <ligand>
        <name>Ca(2+)</name>
        <dbReference type="ChEBI" id="CHEBI:29108"/>
    </ligand>
</feature>
<feature type="binding site" evidence="1">
    <location>
        <position position="77"/>
    </location>
    <ligand>
        <name>Ca(2+)</name>
        <dbReference type="ChEBI" id="CHEBI:29108"/>
    </ligand>
</feature>
<feature type="binding site" evidence="1">
    <location>
        <position position="80"/>
    </location>
    <ligand>
        <name>Ca(2+)</name>
        <dbReference type="ChEBI" id="CHEBI:29108"/>
    </ligand>
</feature>
<feature type="binding site" evidence="1">
    <location>
        <position position="85"/>
    </location>
    <ligand>
        <name>Ca(2+)</name>
        <dbReference type="ChEBI" id="CHEBI:29108"/>
    </ligand>
</feature>
<feature type="site" description="Required for specificity" evidence="1">
    <location>
        <position position="194"/>
    </location>
</feature>
<feature type="modified residue" description="Sulfotyrosine" evidence="8 9">
    <location>
        <position position="154"/>
    </location>
</feature>
<feature type="disulfide bond" evidence="2">
    <location>
        <begin position="30"/>
        <end position="160"/>
    </location>
</feature>
<feature type="disulfide bond" evidence="2">
    <location>
        <begin position="48"/>
        <end position="64"/>
    </location>
</feature>
<feature type="disulfide bond" evidence="2">
    <location>
        <begin position="171"/>
        <end position="185"/>
    </location>
</feature>
<feature type="disulfide bond" evidence="2">
    <location>
        <begin position="196"/>
        <end position="220"/>
    </location>
</feature>
<feature type="sequence variant" id="VAR_051858" description="In dbSNP:rs11547028.">
    <original>A</original>
    <variation>V</variation>
    <location>
        <position position="117"/>
    </location>
</feature>
<feature type="sequence variant" id="VAR_071761" description="Abolishes tyrosine sulfation; dbSNP:rs1804564." evidence="5">
    <original>D</original>
    <variation>H</variation>
    <location>
        <position position="153"/>
    </location>
</feature>
<gene>
    <name type="primary">PRSS2</name>
    <name type="synonym">TRY2</name>
    <name type="synonym">TRYP2</name>
</gene>
<sequence length="247" mass="26488">MNLLLILTFVAAAVAAPFDDDDKIVGGYICEENSVPYQVSLNSGYHFCGGSLISEQWVVSAGHCYKSRIQVRLGEHNIEVLEGNEQFINAAKIIRHPKYNSRTLDNDILLIKLSSPAVINSRVSAISLPTAPPAAGTESLISGWGNTLSSGADYPDELQCLDAPVLSQAECEASYPGKITNNMFCVGFLEGGKDSCQGDSGGPVVSNGELQGIVSWGYGCAQKNRPGVYTKVYNYVDWIKDTIAANS</sequence>
<reference key="1">
    <citation type="journal article" date="1986" name="Gene">
        <title>Cloning, characterization and nucleotide sequences of two cDNAs encoding human pancreatic trypsinogens.</title>
        <authorList>
            <person name="Emi M."/>
            <person name="Nakamura Y."/>
            <person name="Ogawa M."/>
            <person name="Yamamoto T."/>
            <person name="Nishide T."/>
            <person name="Mori T."/>
            <person name="Matsubara K."/>
        </authorList>
    </citation>
    <scope>NUCLEOTIDE SEQUENCE [MRNA]</scope>
</reference>
<reference key="2">
    <citation type="journal article" date="1989" name="Clin. Chim. Acta">
        <title>Immunoreactive anionic and cationic trypsin in human serum.</title>
        <authorList>
            <person name="Kimland M."/>
            <person name="Russick C."/>
            <person name="Marks W.H."/>
            <person name="Borgstroem A."/>
        </authorList>
    </citation>
    <scope>PROTEIN SEQUENCE OF 16-49</scope>
</reference>
<reference key="3">
    <citation type="journal article" date="2002" name="Nat. Immunol.">
        <title>Paneth cell trypsin is the processing enzyme for human defensin-5.</title>
        <authorList>
            <person name="Ghosh D."/>
            <person name="Porter E."/>
            <person name="Shen B."/>
            <person name="Lee S.K."/>
            <person name="Wilk D."/>
            <person name="Drazba J."/>
            <person name="Yadav S.P."/>
            <person name="Crabb J.W."/>
            <person name="Ganz T."/>
            <person name="Bevins C.L."/>
        </authorList>
    </citation>
    <scope>FUNCTION</scope>
    <scope>TISSUE SPECIFICITY</scope>
</reference>
<reference key="4">
    <citation type="journal article" date="2006" name="FEBS J.">
        <title>Human cationic trypsinogen is sulfated on Tyr154.</title>
        <authorList>
            <person name="Sahin-Toth M."/>
            <person name="Kukor Z."/>
            <person name="Nemoda Z."/>
        </authorList>
    </citation>
    <scope>SULFATION</scope>
</reference>
<reference key="5">
    <citation type="journal article" date="2014" name="PLoS ONE">
        <title>Tyrosine sulfation of human trypsin steers S2' subsite selectivity towards basic amino acids.</title>
        <authorList>
            <person name="Szabo A."/>
            <person name="Salameh M.A."/>
            <person name="Ludwig M."/>
            <person name="Radisky E.S."/>
            <person name="Sahin-Toth M."/>
        </authorList>
    </citation>
    <scope>SULFATION AT TYR-154</scope>
</reference>
<reference key="6">
    <citation type="journal article" date="2009" name="Biochem. J.">
        <title>A common African polymorphism abolishes tyrosine sulfation of human anionic trypsinogen (PRSS2).</title>
        <authorList>
            <person name="Ronai Z."/>
            <person name="Witt H."/>
            <person name="Rickards O."/>
            <person name="Destro-Bisol G."/>
            <person name="Bradbury A.R."/>
            <person name="Sahin-Toth M."/>
        </authorList>
    </citation>
    <scope>VARIANT HIS-153</scope>
    <scope>CHARACTERIZATION OF VARIANT HIS-153</scope>
</reference>
<proteinExistence type="evidence at protein level"/>
<comment type="function">
    <text evidence="3">In the ileum, may be involved in defensin processing, including DEFA5.</text>
</comment>
<comment type="catalytic activity">
    <reaction>
        <text>Preferential cleavage: Arg-|-Xaa, Lys-|-Xaa.</text>
        <dbReference type="EC" id="3.4.21.4"/>
    </reaction>
</comment>
<comment type="cofactor">
    <cofactor evidence="1">
        <name>Ca(2+)</name>
        <dbReference type="ChEBI" id="CHEBI:29108"/>
    </cofactor>
    <text evidence="1">Binds 1 Ca(2+) ion per subunit.</text>
</comment>
<comment type="subcellular location">
    <subcellularLocation>
        <location>Secreted</location>
        <location>Extracellular space</location>
    </subcellularLocation>
</comment>
<comment type="tissue specificity">
    <text evidence="3">Expressed in Paneth cells, at the base of small intestinal crypts.</text>
</comment>
<comment type="PTM">
    <text evidence="4">Sulfated on tyrosine.</text>
</comment>
<comment type="PTM">
    <text evidence="6">Sulfation at Tyr-154 increases selectivity towards basic versus apolar residues at the P2' position of inhibitors that bind in a substrate-like fashion. Although the increase in selectivity is relatively small, it may facilitate digestion of a broader range of dietary proteins.</text>
</comment>
<comment type="polymorphism">
    <text evidence="5">His-153 variation is a common polymorphism in African populations with a minor allele frequency of 9.2%, it eliminates sulfation at Tyr-154, with no consequences on digestive physiology.</text>
</comment>
<comment type="similarity">
    <text evidence="2">Belongs to the peptidase S1 family.</text>
</comment>
<dbReference type="EC" id="3.4.21.4"/>
<dbReference type="EMBL" id="M27602">
    <property type="protein sequence ID" value="AAA61232.1"/>
    <property type="molecule type" value="mRNA"/>
</dbReference>
<dbReference type="CCDS" id="CCDS83236.1"/>
<dbReference type="PIR" id="B25852">
    <property type="entry name" value="B25852"/>
</dbReference>
<dbReference type="RefSeq" id="NP_002761.1">
    <property type="nucleotide sequence ID" value="NM_002770.4"/>
</dbReference>
<dbReference type="SMR" id="P07478"/>
<dbReference type="BioGRID" id="111627">
    <property type="interactions" value="44"/>
</dbReference>
<dbReference type="FunCoup" id="P07478">
    <property type="interactions" value="606"/>
</dbReference>
<dbReference type="IntAct" id="P07478">
    <property type="interactions" value="29"/>
</dbReference>
<dbReference type="MINT" id="P07478"/>
<dbReference type="STRING" id="9606.ENSP00000488437"/>
<dbReference type="BindingDB" id="P07478"/>
<dbReference type="ChEMBL" id="CHEMBL3159"/>
<dbReference type="DrugBank" id="DB04410">
    <property type="generic name" value="3-Phenylpropylamine"/>
</dbReference>
<dbReference type="DrugBank" id="DB03127">
    <property type="generic name" value="Benzamidine"/>
</dbReference>
<dbReference type="DrugBank" id="DB02464">
    <property type="generic name" value="Benzylamine"/>
</dbReference>
<dbReference type="DrugBank" id="DB01805">
    <property type="generic name" value="Monoisopropylphosphorylserine"/>
</dbReference>
<dbReference type="DrugBank" id="DB01973">
    <property type="generic name" value="O-Benzylsulfonyl-Serine"/>
</dbReference>
<dbReference type="DrugBank" id="DB04325">
    <property type="generic name" value="Phenethylamine"/>
</dbReference>
<dbReference type="DrugBank" id="DB03976">
    <property type="generic name" value="Phosphorylisopropane"/>
</dbReference>
<dbReference type="DrugCentral" id="P07478"/>
<dbReference type="MEROPS" id="S01.258"/>
<dbReference type="GlyGen" id="P07478">
    <property type="glycosylation" value="1 site, 1 O-linked glycan (1 site)"/>
</dbReference>
<dbReference type="iPTMnet" id="P07478"/>
<dbReference type="PhosphoSitePlus" id="P07478"/>
<dbReference type="BioMuta" id="PRSS2"/>
<dbReference type="DMDM" id="136413"/>
<dbReference type="jPOST" id="P07478"/>
<dbReference type="MassIVE" id="P07478"/>
<dbReference type="PaxDb" id="9606-ENSP00000485444"/>
<dbReference type="PeptideAtlas" id="P07478"/>
<dbReference type="ProteomicsDB" id="52007"/>
<dbReference type="TopDownProteomics" id="P07478"/>
<dbReference type="Antibodypedia" id="74627">
    <property type="antibodies" value="158 antibodies from 21 providers"/>
</dbReference>
<dbReference type="DNASU" id="5645"/>
<dbReference type="Ensembl" id="ENST00000539842.6">
    <property type="protein sequence ID" value="ENSP00000488338.1"/>
    <property type="gene ID" value="ENSG00000275896.7"/>
</dbReference>
<dbReference type="Ensembl" id="ENST00000632112.1">
    <property type="protein sequence ID" value="ENSP00000487952.1"/>
    <property type="gene ID" value="ENSG00000282049.1"/>
</dbReference>
<dbReference type="GeneID" id="5645"/>
<dbReference type="KEGG" id="hsa:5645"/>
<dbReference type="MANE-Select" id="ENST00000539842.6">
    <property type="protein sequence ID" value="ENSP00000488338.1"/>
    <property type="RefSeq nucleotide sequence ID" value="NM_002770.4"/>
    <property type="RefSeq protein sequence ID" value="NP_002761.1"/>
</dbReference>
<dbReference type="AGR" id="HGNC:9483"/>
<dbReference type="CTD" id="5645"/>
<dbReference type="DisGeNET" id="5645"/>
<dbReference type="GeneCards" id="PRSS2"/>
<dbReference type="HGNC" id="HGNC:9483">
    <property type="gene designation" value="PRSS2"/>
</dbReference>
<dbReference type="HPA" id="ENSG00000275896">
    <property type="expression patterns" value="Tissue enriched (pancreas)"/>
</dbReference>
<dbReference type="MalaCards" id="PRSS2"/>
<dbReference type="MIM" id="601564">
    <property type="type" value="gene"/>
</dbReference>
<dbReference type="neXtProt" id="NX_P07478"/>
<dbReference type="OpenTargets" id="ENSG00000275896"/>
<dbReference type="Orphanet" id="676">
    <property type="disease" value="Hereditary chronic pancreatitis"/>
</dbReference>
<dbReference type="PharmGKB" id="PA33833"/>
<dbReference type="VEuPathDB" id="HostDB:ENSG00000275896"/>
<dbReference type="eggNOG" id="KOG3627">
    <property type="taxonomic scope" value="Eukaryota"/>
</dbReference>
<dbReference type="GeneTree" id="ENSGT01050000244883"/>
<dbReference type="InParanoid" id="P07478"/>
<dbReference type="OrthoDB" id="10059102at2759"/>
<dbReference type="PAN-GO" id="P07478">
    <property type="GO annotations" value="3 GO annotations based on evolutionary models"/>
</dbReference>
<dbReference type="PhylomeDB" id="P07478"/>
<dbReference type="PathwayCommons" id="P07478"/>
<dbReference type="Reactome" id="R-HSA-1442490">
    <property type="pathway name" value="Collagen degradation"/>
</dbReference>
<dbReference type="Reactome" id="R-HSA-1462054">
    <property type="pathway name" value="Alpha-defensins"/>
</dbReference>
<dbReference type="Reactome" id="R-HSA-1592389">
    <property type="pathway name" value="Activation of Matrix Metalloproteinases"/>
</dbReference>
<dbReference type="Reactome" id="R-HSA-6798695">
    <property type="pathway name" value="Neutrophil degranulation"/>
</dbReference>
<dbReference type="Reactome" id="R-HSA-6803157">
    <property type="pathway name" value="Antimicrobial peptides"/>
</dbReference>
<dbReference type="SignaLink" id="P07478"/>
<dbReference type="SIGNOR" id="P07478"/>
<dbReference type="BioGRID-ORCS" id="5645">
    <property type="hits" value="6 hits in 217 CRISPR screens"/>
</dbReference>
<dbReference type="ChiTaRS" id="PRSS2">
    <property type="organism name" value="human"/>
</dbReference>
<dbReference type="GenomeRNAi" id="5645"/>
<dbReference type="Pharos" id="P07478">
    <property type="development level" value="Tchem"/>
</dbReference>
<dbReference type="PRO" id="PR:P07478"/>
<dbReference type="Proteomes" id="UP000005640">
    <property type="component" value="Chromosome 7"/>
</dbReference>
<dbReference type="RNAct" id="P07478">
    <property type="molecule type" value="protein"/>
</dbReference>
<dbReference type="Bgee" id="ENSG00000275896">
    <property type="expression patterns" value="Expressed in body of pancreas and 89 other cell types or tissues"/>
</dbReference>
<dbReference type="ExpressionAtlas" id="P07478">
    <property type="expression patterns" value="baseline and differential"/>
</dbReference>
<dbReference type="GO" id="GO:0035578">
    <property type="term" value="C:azurophil granule lumen"/>
    <property type="evidence" value="ECO:0000304"/>
    <property type="project" value="Reactome"/>
</dbReference>
<dbReference type="GO" id="GO:0031012">
    <property type="term" value="C:extracellular matrix"/>
    <property type="evidence" value="ECO:0000304"/>
    <property type="project" value="UniProtKB"/>
</dbReference>
<dbReference type="GO" id="GO:0005576">
    <property type="term" value="C:extracellular region"/>
    <property type="evidence" value="ECO:0000314"/>
    <property type="project" value="UniProtKB"/>
</dbReference>
<dbReference type="GO" id="GO:0005615">
    <property type="term" value="C:extracellular space"/>
    <property type="evidence" value="ECO:0000315"/>
    <property type="project" value="UniProtKB"/>
</dbReference>
<dbReference type="GO" id="GO:0005509">
    <property type="term" value="F:calcium ion binding"/>
    <property type="evidence" value="ECO:0000314"/>
    <property type="project" value="UniProtKB"/>
</dbReference>
<dbReference type="GO" id="GO:0004222">
    <property type="term" value="F:metalloendopeptidase activity"/>
    <property type="evidence" value="ECO:0000304"/>
    <property type="project" value="Reactome"/>
</dbReference>
<dbReference type="GO" id="GO:0004252">
    <property type="term" value="F:serine-type endopeptidase activity"/>
    <property type="evidence" value="ECO:0000314"/>
    <property type="project" value="UniProtKB"/>
</dbReference>
<dbReference type="GO" id="GO:0008236">
    <property type="term" value="F:serine-type peptidase activity"/>
    <property type="evidence" value="ECO:0000304"/>
    <property type="project" value="Reactome"/>
</dbReference>
<dbReference type="GO" id="GO:0019730">
    <property type="term" value="P:antimicrobial humoral response"/>
    <property type="evidence" value="ECO:0000304"/>
    <property type="project" value="Reactome"/>
</dbReference>
<dbReference type="GO" id="GO:0030574">
    <property type="term" value="P:collagen catabolic process"/>
    <property type="evidence" value="ECO:0000314"/>
    <property type="project" value="UniProtKB"/>
</dbReference>
<dbReference type="GO" id="GO:0007586">
    <property type="term" value="P:digestion"/>
    <property type="evidence" value="ECO:0007669"/>
    <property type="project" value="UniProtKB-KW"/>
</dbReference>
<dbReference type="GO" id="GO:0022617">
    <property type="term" value="P:extracellular matrix disassembly"/>
    <property type="evidence" value="ECO:0000304"/>
    <property type="project" value="Reactome"/>
</dbReference>
<dbReference type="GO" id="GO:0045785">
    <property type="term" value="P:positive regulation of cell adhesion"/>
    <property type="evidence" value="ECO:0000304"/>
    <property type="project" value="UniProtKB"/>
</dbReference>
<dbReference type="GO" id="GO:0030307">
    <property type="term" value="P:positive regulation of cell growth"/>
    <property type="evidence" value="ECO:0000304"/>
    <property type="project" value="UniProtKB"/>
</dbReference>
<dbReference type="GO" id="GO:0006508">
    <property type="term" value="P:proteolysis"/>
    <property type="evidence" value="ECO:0000314"/>
    <property type="project" value="UniProtKB"/>
</dbReference>
<dbReference type="CDD" id="cd00190">
    <property type="entry name" value="Tryp_SPc"/>
    <property type="match status" value="1"/>
</dbReference>
<dbReference type="FunFam" id="2.40.10.10:FF:000019">
    <property type="entry name" value="Anionic trypsin"/>
    <property type="match status" value="1"/>
</dbReference>
<dbReference type="Gene3D" id="2.40.10.10">
    <property type="entry name" value="Trypsin-like serine proteases"/>
    <property type="match status" value="2"/>
</dbReference>
<dbReference type="InterPro" id="IPR009003">
    <property type="entry name" value="Peptidase_S1_PA"/>
</dbReference>
<dbReference type="InterPro" id="IPR043504">
    <property type="entry name" value="Peptidase_S1_PA_chymotrypsin"/>
</dbReference>
<dbReference type="InterPro" id="IPR001314">
    <property type="entry name" value="Peptidase_S1A"/>
</dbReference>
<dbReference type="InterPro" id="IPR050127">
    <property type="entry name" value="Serine_Proteases_S1"/>
</dbReference>
<dbReference type="InterPro" id="IPR001254">
    <property type="entry name" value="Trypsin_dom"/>
</dbReference>
<dbReference type="InterPro" id="IPR018114">
    <property type="entry name" value="TRYPSIN_HIS"/>
</dbReference>
<dbReference type="InterPro" id="IPR033116">
    <property type="entry name" value="TRYPSIN_SER"/>
</dbReference>
<dbReference type="PANTHER" id="PTHR24264:SF57">
    <property type="entry name" value="TRYPSIN-2"/>
    <property type="match status" value="1"/>
</dbReference>
<dbReference type="PANTHER" id="PTHR24264">
    <property type="entry name" value="TRYPSIN-RELATED"/>
    <property type="match status" value="1"/>
</dbReference>
<dbReference type="Pfam" id="PF00089">
    <property type="entry name" value="Trypsin"/>
    <property type="match status" value="1"/>
</dbReference>
<dbReference type="PRINTS" id="PR00722">
    <property type="entry name" value="CHYMOTRYPSIN"/>
</dbReference>
<dbReference type="SMART" id="SM00020">
    <property type="entry name" value="Tryp_SPc"/>
    <property type="match status" value="1"/>
</dbReference>
<dbReference type="SUPFAM" id="SSF50494">
    <property type="entry name" value="Trypsin-like serine proteases"/>
    <property type="match status" value="1"/>
</dbReference>
<dbReference type="PROSITE" id="PS50240">
    <property type="entry name" value="TRYPSIN_DOM"/>
    <property type="match status" value="1"/>
</dbReference>
<dbReference type="PROSITE" id="PS00134">
    <property type="entry name" value="TRYPSIN_HIS"/>
    <property type="match status" value="1"/>
</dbReference>
<dbReference type="PROSITE" id="PS00135">
    <property type="entry name" value="TRYPSIN_SER"/>
    <property type="match status" value="1"/>
</dbReference>
<protein>
    <recommendedName>
        <fullName>Trypsin-2</fullName>
        <ecNumber>3.4.21.4</ecNumber>
    </recommendedName>
    <alternativeName>
        <fullName>Anionic trypsinogen</fullName>
    </alternativeName>
    <alternativeName>
        <fullName>Serine protease 2</fullName>
    </alternativeName>
    <alternativeName>
        <fullName>Trypsin II</fullName>
    </alternativeName>
</protein>